<protein>
    <recommendedName>
        <fullName evidence="1">Homoserine O-succinyltransferase</fullName>
        <shortName evidence="1">HST</shortName>
        <ecNumber evidence="1">2.3.1.46</ecNumber>
    </recommendedName>
    <alternativeName>
        <fullName evidence="1">Homoserine transsuccinylase</fullName>
        <shortName evidence="1">HTS</shortName>
    </alternativeName>
</protein>
<organism>
    <name type="scientific">Nitrosomonas eutropha (strain DSM 101675 / C91 / Nm57)</name>
    <dbReference type="NCBI Taxonomy" id="335283"/>
    <lineage>
        <taxon>Bacteria</taxon>
        <taxon>Pseudomonadati</taxon>
        <taxon>Pseudomonadota</taxon>
        <taxon>Betaproteobacteria</taxon>
        <taxon>Nitrosomonadales</taxon>
        <taxon>Nitrosomonadaceae</taxon>
        <taxon>Nitrosomonas</taxon>
    </lineage>
</organism>
<evidence type="ECO:0000255" key="1">
    <source>
        <dbReference type="HAMAP-Rule" id="MF_00296"/>
    </source>
</evidence>
<dbReference type="EC" id="2.3.1.46" evidence="1"/>
<dbReference type="EMBL" id="CP000450">
    <property type="protein sequence ID" value="ABI58803.1"/>
    <property type="molecule type" value="Genomic_DNA"/>
</dbReference>
<dbReference type="RefSeq" id="WP_011633645.1">
    <property type="nucleotide sequence ID" value="NC_008344.1"/>
</dbReference>
<dbReference type="SMR" id="Q0AIM3"/>
<dbReference type="STRING" id="335283.Neut_0528"/>
<dbReference type="ESTHER" id="nitec-metx">
    <property type="family name" value="Homoserine_transacetylase"/>
</dbReference>
<dbReference type="KEGG" id="net:Neut_0528"/>
<dbReference type="eggNOG" id="COG2021">
    <property type="taxonomic scope" value="Bacteria"/>
</dbReference>
<dbReference type="HOGENOM" id="CLU_028760_1_2_4"/>
<dbReference type="OrthoDB" id="9800754at2"/>
<dbReference type="UniPathway" id="UPA00051">
    <property type="reaction ID" value="UER00075"/>
</dbReference>
<dbReference type="Proteomes" id="UP000001966">
    <property type="component" value="Chromosome"/>
</dbReference>
<dbReference type="GO" id="GO:0005737">
    <property type="term" value="C:cytoplasm"/>
    <property type="evidence" value="ECO:0007669"/>
    <property type="project" value="UniProtKB-SubCell"/>
</dbReference>
<dbReference type="GO" id="GO:0004414">
    <property type="term" value="F:homoserine O-acetyltransferase activity"/>
    <property type="evidence" value="ECO:0007669"/>
    <property type="project" value="TreeGrafter"/>
</dbReference>
<dbReference type="GO" id="GO:0008899">
    <property type="term" value="F:homoserine O-succinyltransferase activity"/>
    <property type="evidence" value="ECO:0007669"/>
    <property type="project" value="UniProtKB-UniRule"/>
</dbReference>
<dbReference type="GO" id="GO:0009092">
    <property type="term" value="P:homoserine metabolic process"/>
    <property type="evidence" value="ECO:0007669"/>
    <property type="project" value="TreeGrafter"/>
</dbReference>
<dbReference type="GO" id="GO:0009086">
    <property type="term" value="P:methionine biosynthetic process"/>
    <property type="evidence" value="ECO:0007669"/>
    <property type="project" value="UniProtKB-UniRule"/>
</dbReference>
<dbReference type="FunFam" id="1.10.1740.110:FF:000001">
    <property type="entry name" value="Homoserine O-acetyltransferase"/>
    <property type="match status" value="1"/>
</dbReference>
<dbReference type="Gene3D" id="1.10.1740.110">
    <property type="match status" value="1"/>
</dbReference>
<dbReference type="Gene3D" id="3.40.50.1820">
    <property type="entry name" value="alpha/beta hydrolase"/>
    <property type="match status" value="1"/>
</dbReference>
<dbReference type="HAMAP" id="MF_00296">
    <property type="entry name" value="MetX_acyltransf"/>
    <property type="match status" value="1"/>
</dbReference>
<dbReference type="InterPro" id="IPR000073">
    <property type="entry name" value="AB_hydrolase_1"/>
</dbReference>
<dbReference type="InterPro" id="IPR029058">
    <property type="entry name" value="AB_hydrolase_fold"/>
</dbReference>
<dbReference type="InterPro" id="IPR008220">
    <property type="entry name" value="HAT_MetX-like"/>
</dbReference>
<dbReference type="NCBIfam" id="TIGR01392">
    <property type="entry name" value="homoserO_Ac_trn"/>
    <property type="match status" value="1"/>
</dbReference>
<dbReference type="NCBIfam" id="NF001209">
    <property type="entry name" value="PRK00175.1"/>
    <property type="match status" value="1"/>
</dbReference>
<dbReference type="PANTHER" id="PTHR32268">
    <property type="entry name" value="HOMOSERINE O-ACETYLTRANSFERASE"/>
    <property type="match status" value="1"/>
</dbReference>
<dbReference type="PANTHER" id="PTHR32268:SF11">
    <property type="entry name" value="HOMOSERINE O-ACETYLTRANSFERASE"/>
    <property type="match status" value="1"/>
</dbReference>
<dbReference type="Pfam" id="PF00561">
    <property type="entry name" value="Abhydrolase_1"/>
    <property type="match status" value="1"/>
</dbReference>
<dbReference type="PIRSF" id="PIRSF000443">
    <property type="entry name" value="Homoser_Ac_trans"/>
    <property type="match status" value="1"/>
</dbReference>
<dbReference type="SUPFAM" id="SSF53474">
    <property type="entry name" value="alpha/beta-Hydrolases"/>
    <property type="match status" value="1"/>
</dbReference>
<gene>
    <name evidence="1" type="primary">metXS</name>
    <name type="ordered locus">Neut_0528</name>
</gene>
<feature type="chain" id="PRO_1000021890" description="Homoserine O-succinyltransferase">
    <location>
        <begin position="1"/>
        <end position="377"/>
    </location>
</feature>
<feature type="domain" description="AB hydrolase-1" evidence="1">
    <location>
        <begin position="50"/>
        <end position="358"/>
    </location>
</feature>
<feature type="active site" description="Nucleophile" evidence="1">
    <location>
        <position position="156"/>
    </location>
</feature>
<feature type="active site" evidence="1">
    <location>
        <position position="321"/>
    </location>
</feature>
<feature type="active site" evidence="1">
    <location>
        <position position="354"/>
    </location>
</feature>
<feature type="binding site" evidence="1">
    <location>
        <position position="226"/>
    </location>
    <ligand>
        <name>substrate</name>
    </ligand>
</feature>
<feature type="binding site" evidence="1">
    <location>
        <position position="355"/>
    </location>
    <ligand>
        <name>substrate</name>
    </ligand>
</feature>
<feature type="site" description="Important for acyl-CoA specificity" evidence="1">
    <location>
        <position position="323"/>
    </location>
</feature>
<comment type="function">
    <text evidence="1">Transfers a succinyl group from succinyl-CoA to L-homoserine, forming succinyl-L-homoserine.</text>
</comment>
<comment type="catalytic activity">
    <reaction evidence="1">
        <text>L-homoserine + succinyl-CoA = O-succinyl-L-homoserine + CoA</text>
        <dbReference type="Rhea" id="RHEA:22008"/>
        <dbReference type="ChEBI" id="CHEBI:57287"/>
        <dbReference type="ChEBI" id="CHEBI:57292"/>
        <dbReference type="ChEBI" id="CHEBI:57476"/>
        <dbReference type="ChEBI" id="CHEBI:57661"/>
        <dbReference type="EC" id="2.3.1.46"/>
    </reaction>
</comment>
<comment type="pathway">
    <text evidence="1">Amino-acid biosynthesis; L-methionine biosynthesis via de novo pathway; O-succinyl-L-homoserine from L-homoserine: step 1/1.</text>
</comment>
<comment type="subunit">
    <text evidence="1">Homodimer.</text>
</comment>
<comment type="subcellular location">
    <subcellularLocation>
        <location evidence="1">Cytoplasm</location>
    </subcellularLocation>
</comment>
<comment type="similarity">
    <text evidence="1">Belongs to the AB hydrolase superfamily. MetX family.</text>
</comment>
<reference key="1">
    <citation type="journal article" date="2007" name="Environ. Microbiol.">
        <title>Whole-genome analysis of the ammonia-oxidizing bacterium, Nitrosomonas eutropha C91: implications for niche adaptation.</title>
        <authorList>
            <person name="Stein L.Y."/>
            <person name="Arp D.J."/>
            <person name="Berube P.M."/>
            <person name="Chain P.S."/>
            <person name="Hauser L."/>
            <person name="Jetten M.S."/>
            <person name="Klotz M.G."/>
            <person name="Larimer F.W."/>
            <person name="Norton J.M."/>
            <person name="Op den Camp H.J.M."/>
            <person name="Shin M."/>
            <person name="Wei X."/>
        </authorList>
    </citation>
    <scope>NUCLEOTIDE SEQUENCE [LARGE SCALE GENOMIC DNA]</scope>
    <source>
        <strain>DSM 101675 / C91 / Nm57</strain>
    </source>
</reference>
<accession>Q0AIM3</accession>
<name>METXS_NITEC</name>
<keyword id="KW-0012">Acyltransferase</keyword>
<keyword id="KW-0028">Amino-acid biosynthesis</keyword>
<keyword id="KW-0963">Cytoplasm</keyword>
<keyword id="KW-0486">Methionine biosynthesis</keyword>
<keyword id="KW-0808">Transferase</keyword>
<proteinExistence type="inferred from homology"/>
<sequence length="377" mass="42129">MFMQDSDSIGIVSARRVHFDTPLSLKSRAVLDSYELVYETYGELNPERSNAILVCHALSGNHHVAGVYADNPKNTGWWNNMIGPGKPIDTRKFFVIGINNLGGCHGSTGPISINNRTGKRYGPDFPLVTTSDWAKTYVRFADQFGIDCFAAIIGGSLGGMSAMQLALDAPERVRHVAVIAASARLTAQNIAFNDVARQAILTDPDFHGGDYYSHGTHPRRGLRLARMLGHITYLSDDSMASKFGRELRNGSLAFNYDVEFQIESYLHYQGDKFADLFDANTYLLMTKALDYFDPAQDYDGNLSAAFARAQADFLVLSFTSDWRFSPERSREIVKALLDNKLNVSYAEIPSTYGHDSFLMQDDYYHQLVRAYMDNISI</sequence>